<proteinExistence type="inferred from homology"/>
<sequence length="154" mass="17307">MLYLTRRVETPAQTTASVTLPVDMRVKSRIKVTLNDGRQAGLLLPRGLLLRDGDILSNENGDEFIKVIAADEAVSVVRCADPFMLAKACWHLGNRHVPLQIMPGELRYHHDHVLDDMLRQFGLDVDFAHLPFEPEAGAYASKSHAHNHDQEHSH</sequence>
<feature type="chain" id="PRO_1000197436" description="Urease accessory protein UreE">
    <location>
        <begin position="1"/>
        <end position="154"/>
    </location>
</feature>
<keyword id="KW-0143">Chaperone</keyword>
<keyword id="KW-0963">Cytoplasm</keyword>
<keyword id="KW-0533">Nickel</keyword>
<name>UREE_ECO5E</name>
<dbReference type="EMBL" id="CP001164">
    <property type="protein sequence ID" value="ACI38779.1"/>
    <property type="molecule type" value="Genomic_DNA"/>
</dbReference>
<dbReference type="RefSeq" id="WP_000966485.1">
    <property type="nucleotide sequence ID" value="NC_011353.1"/>
</dbReference>
<dbReference type="SMR" id="B5YUX4"/>
<dbReference type="KEGG" id="ecf:ECH74115_1324"/>
<dbReference type="HOGENOM" id="CLU_093757_2_0_6"/>
<dbReference type="GO" id="GO:0005737">
    <property type="term" value="C:cytoplasm"/>
    <property type="evidence" value="ECO:0007669"/>
    <property type="project" value="UniProtKB-SubCell"/>
</dbReference>
<dbReference type="GO" id="GO:0016151">
    <property type="term" value="F:nickel cation binding"/>
    <property type="evidence" value="ECO:0007669"/>
    <property type="project" value="UniProtKB-UniRule"/>
</dbReference>
<dbReference type="GO" id="GO:0051082">
    <property type="term" value="F:unfolded protein binding"/>
    <property type="evidence" value="ECO:0007669"/>
    <property type="project" value="UniProtKB-UniRule"/>
</dbReference>
<dbReference type="GO" id="GO:0006457">
    <property type="term" value="P:protein folding"/>
    <property type="evidence" value="ECO:0007669"/>
    <property type="project" value="InterPro"/>
</dbReference>
<dbReference type="GO" id="GO:0065003">
    <property type="term" value="P:protein-containing complex assembly"/>
    <property type="evidence" value="ECO:0007669"/>
    <property type="project" value="InterPro"/>
</dbReference>
<dbReference type="GO" id="GO:0019627">
    <property type="term" value="P:urea metabolic process"/>
    <property type="evidence" value="ECO:0007669"/>
    <property type="project" value="InterPro"/>
</dbReference>
<dbReference type="CDD" id="cd00571">
    <property type="entry name" value="UreE"/>
    <property type="match status" value="1"/>
</dbReference>
<dbReference type="Gene3D" id="2.60.260.20">
    <property type="entry name" value="Urease metallochaperone UreE, N-terminal domain"/>
    <property type="match status" value="1"/>
</dbReference>
<dbReference type="Gene3D" id="3.30.70.790">
    <property type="entry name" value="UreE, C-terminal domain"/>
    <property type="match status" value="1"/>
</dbReference>
<dbReference type="HAMAP" id="MF_00822">
    <property type="entry name" value="UreE"/>
    <property type="match status" value="1"/>
</dbReference>
<dbReference type="InterPro" id="IPR012406">
    <property type="entry name" value="UreE"/>
</dbReference>
<dbReference type="InterPro" id="IPR007864">
    <property type="entry name" value="UreE_C_dom"/>
</dbReference>
<dbReference type="InterPro" id="IPR004029">
    <property type="entry name" value="UreE_N"/>
</dbReference>
<dbReference type="InterPro" id="IPR036118">
    <property type="entry name" value="UreE_N_sf"/>
</dbReference>
<dbReference type="NCBIfam" id="NF009751">
    <property type="entry name" value="PRK13261.1-1"/>
    <property type="match status" value="1"/>
</dbReference>
<dbReference type="Pfam" id="PF05194">
    <property type="entry name" value="UreE_C"/>
    <property type="match status" value="1"/>
</dbReference>
<dbReference type="Pfam" id="PF02814">
    <property type="entry name" value="UreE_N"/>
    <property type="match status" value="1"/>
</dbReference>
<dbReference type="PIRSF" id="PIRSF036402">
    <property type="entry name" value="Ureas_acces_UreE"/>
    <property type="match status" value="1"/>
</dbReference>
<dbReference type="SMART" id="SM00988">
    <property type="entry name" value="UreE_N"/>
    <property type="match status" value="1"/>
</dbReference>
<dbReference type="SUPFAM" id="SSF69737">
    <property type="entry name" value="Urease metallochaperone UreE, C-terminal domain"/>
    <property type="match status" value="1"/>
</dbReference>
<dbReference type="SUPFAM" id="SSF69287">
    <property type="entry name" value="Urease metallochaperone UreE, N-terminal domain"/>
    <property type="match status" value="1"/>
</dbReference>
<organism>
    <name type="scientific">Escherichia coli O157:H7 (strain EC4115 / EHEC)</name>
    <dbReference type="NCBI Taxonomy" id="444450"/>
    <lineage>
        <taxon>Bacteria</taxon>
        <taxon>Pseudomonadati</taxon>
        <taxon>Pseudomonadota</taxon>
        <taxon>Gammaproteobacteria</taxon>
        <taxon>Enterobacterales</taxon>
        <taxon>Enterobacteriaceae</taxon>
        <taxon>Escherichia</taxon>
    </lineage>
</organism>
<accession>B5YUX4</accession>
<protein>
    <recommendedName>
        <fullName evidence="1">Urease accessory protein UreE</fullName>
    </recommendedName>
</protein>
<reference key="1">
    <citation type="journal article" date="2011" name="Proc. Natl. Acad. Sci. U.S.A.">
        <title>Genomic anatomy of Escherichia coli O157:H7 outbreaks.</title>
        <authorList>
            <person name="Eppinger M."/>
            <person name="Mammel M.K."/>
            <person name="Leclerc J.E."/>
            <person name="Ravel J."/>
            <person name="Cebula T.A."/>
        </authorList>
    </citation>
    <scope>NUCLEOTIDE SEQUENCE [LARGE SCALE GENOMIC DNA]</scope>
    <source>
        <strain>EC4115 / EHEC</strain>
    </source>
</reference>
<comment type="function">
    <text evidence="1">Involved in urease metallocenter assembly. Binds nickel. Probably functions as a nickel donor during metallocenter assembly.</text>
</comment>
<comment type="subcellular location">
    <subcellularLocation>
        <location evidence="1">Cytoplasm</location>
    </subcellularLocation>
</comment>
<comment type="similarity">
    <text evidence="1">Belongs to the UreE family.</text>
</comment>
<gene>
    <name evidence="1" type="primary">ureE</name>
    <name type="ordered locus">ECH74115_1324</name>
</gene>
<evidence type="ECO:0000255" key="1">
    <source>
        <dbReference type="HAMAP-Rule" id="MF_00822"/>
    </source>
</evidence>